<gene>
    <name evidence="1" type="primary">wecF</name>
    <name evidence="1" type="synonym">rffT</name>
    <name type="ordered locus">SbBS512_E4128</name>
</gene>
<evidence type="ECO:0000255" key="1">
    <source>
        <dbReference type="HAMAP-Rule" id="MF_01002"/>
    </source>
</evidence>
<dbReference type="EC" id="2.4.1.325" evidence="1"/>
<dbReference type="EMBL" id="CP001063">
    <property type="protein sequence ID" value="ACD08940.1"/>
    <property type="molecule type" value="Genomic_DNA"/>
</dbReference>
<dbReference type="RefSeq" id="WP_000217241.1">
    <property type="nucleotide sequence ID" value="NC_010658.1"/>
</dbReference>
<dbReference type="SMR" id="B2TU00"/>
<dbReference type="STRING" id="344609.SbBS512_E4128"/>
<dbReference type="CAZy" id="GT56">
    <property type="family name" value="Glycosyltransferase Family 56"/>
</dbReference>
<dbReference type="GeneID" id="93778151"/>
<dbReference type="KEGG" id="sbc:SbBS512_E4128"/>
<dbReference type="HOGENOM" id="CLU_066584_0_0_6"/>
<dbReference type="UniPathway" id="UPA00566"/>
<dbReference type="Proteomes" id="UP000001030">
    <property type="component" value="Chromosome"/>
</dbReference>
<dbReference type="GO" id="GO:0005886">
    <property type="term" value="C:plasma membrane"/>
    <property type="evidence" value="ECO:0007669"/>
    <property type="project" value="UniProtKB-SubCell"/>
</dbReference>
<dbReference type="GO" id="GO:0102031">
    <property type="term" value="F:4-acetamido-4,6-dideoxy-D-galactose transferase activity"/>
    <property type="evidence" value="ECO:0007669"/>
    <property type="project" value="UniProtKB-EC"/>
</dbReference>
<dbReference type="GO" id="GO:0008417">
    <property type="term" value="F:fucosyltransferase activity"/>
    <property type="evidence" value="ECO:0007669"/>
    <property type="project" value="InterPro"/>
</dbReference>
<dbReference type="GO" id="GO:0009246">
    <property type="term" value="P:enterobacterial common antigen biosynthetic process"/>
    <property type="evidence" value="ECO:0007669"/>
    <property type="project" value="UniProtKB-UniRule"/>
</dbReference>
<dbReference type="GO" id="GO:0036065">
    <property type="term" value="P:fucosylation"/>
    <property type="evidence" value="ECO:0007669"/>
    <property type="project" value="InterPro"/>
</dbReference>
<dbReference type="HAMAP" id="MF_01002">
    <property type="entry name" value="WecF_RffT"/>
    <property type="match status" value="1"/>
</dbReference>
<dbReference type="InterPro" id="IPR009993">
    <property type="entry name" value="WecF"/>
</dbReference>
<dbReference type="NCBIfam" id="NF002752">
    <property type="entry name" value="PRK02797.1-1"/>
    <property type="match status" value="1"/>
</dbReference>
<dbReference type="NCBIfam" id="NF002753">
    <property type="entry name" value="PRK02797.1-2"/>
    <property type="match status" value="1"/>
</dbReference>
<dbReference type="NCBIfam" id="NF002754">
    <property type="entry name" value="PRK02797.1-3"/>
    <property type="match status" value="1"/>
</dbReference>
<dbReference type="Pfam" id="PF07429">
    <property type="entry name" value="Glyco_transf_56"/>
    <property type="match status" value="1"/>
</dbReference>
<name>WECF_SHIB3</name>
<accession>B2TU00</accession>
<feature type="chain" id="PRO_1000134611" description="TDP-N-acetylfucosamine:lipid II N-acetylfucosaminyltransferase">
    <location>
        <begin position="1"/>
        <end position="359"/>
    </location>
</feature>
<comment type="function">
    <text evidence="1">Catalyzes the synthesis of Und-PP-GlcNAc-ManNAcA-Fuc4NAc (Lipid III), the third lipid-linked intermediate involved in ECA synthesis.</text>
</comment>
<comment type="catalytic activity">
    <reaction evidence="1">
        <text>beta-D-ManNAcA-(1-&gt;4)-alpha-D-GlcNAc-di-trans,octa-cis-undecaprenyl diphosphate + dTDP-4-acetamido-4,6-dideoxy-alpha-D-galactose = alpha-D-FucNAc4-(1-&gt;4)-beta-D-ManNAcA-(1-&gt;4)-D-GlcNAc-undecaprenyl diphosphate + dTDP + H(+)</text>
        <dbReference type="Rhea" id="RHEA:28759"/>
        <dbReference type="ChEBI" id="CHEBI:15378"/>
        <dbReference type="ChEBI" id="CHEBI:58369"/>
        <dbReference type="ChEBI" id="CHEBI:61495"/>
        <dbReference type="ChEBI" id="CHEBI:61496"/>
        <dbReference type="ChEBI" id="CHEBI:68493"/>
        <dbReference type="EC" id="2.4.1.325"/>
    </reaction>
</comment>
<comment type="pathway">
    <text evidence="1">Bacterial outer membrane biogenesis; enterobacterial common antigen biosynthesis.</text>
</comment>
<comment type="subcellular location">
    <subcellularLocation>
        <location evidence="1">Cell inner membrane</location>
        <topology evidence="1">Peripheral membrane protein</topology>
    </subcellularLocation>
</comment>
<comment type="similarity">
    <text evidence="1">Belongs to the glycosyltransferase 56 family.</text>
</comment>
<reference key="1">
    <citation type="submission" date="2008-05" db="EMBL/GenBank/DDBJ databases">
        <title>Complete sequence of Shigella boydii serotype 18 strain BS512.</title>
        <authorList>
            <person name="Rasko D.A."/>
            <person name="Rosovitz M."/>
            <person name="Maurelli A.T."/>
            <person name="Myers G."/>
            <person name="Seshadri R."/>
            <person name="Cer R."/>
            <person name="Jiang L."/>
            <person name="Ravel J."/>
            <person name="Sebastian Y."/>
        </authorList>
    </citation>
    <scope>NUCLEOTIDE SEQUENCE [LARGE SCALE GENOMIC DNA]</scope>
    <source>
        <strain>CDC 3083-94 / BS512</strain>
    </source>
</reference>
<sequence>MTVLIHVLGSDIPHHNRTVLRFFNDALAATSEHAREFMVVGKDDGLSDSCPALSVQFFPGKKSLAEAVIAKAKANRQQRFFFHGQFNPTLWLALLSGGIKPSQFFWHIWGADLYELSSGLRYKLFYPLRRLAQKRVGCVFATRGDLSFFAKTHPKVRGELLYFPTRMDPSLNTMANDRQREGKMTILVGNSGDRSNDHIAALRAVHQQFGDTVKVVVPMGYPPNNEAYIEEVRQAGLELFSEENLQILSEKLEFDAYLALLRQCDLGYFIFARQQGIGTLCLLIQAGIPCVLNRENPFWQDMTEQHLPVLFTTDDLNEDIVREAQRQLASVDKNTIAFFSPNYLQGWQRALAIAAGEVA</sequence>
<keyword id="KW-0997">Cell inner membrane</keyword>
<keyword id="KW-1003">Cell membrane</keyword>
<keyword id="KW-0328">Glycosyltransferase</keyword>
<keyword id="KW-0472">Membrane</keyword>
<keyword id="KW-1185">Reference proteome</keyword>
<keyword id="KW-0808">Transferase</keyword>
<protein>
    <recommendedName>
        <fullName evidence="1">TDP-N-acetylfucosamine:lipid II N-acetylfucosaminyltransferase</fullName>
        <ecNumber evidence="1">2.4.1.325</ecNumber>
    </recommendedName>
    <alternativeName>
        <fullName evidence="1">4-alpha-L-fucosyltransferase</fullName>
    </alternativeName>
    <alternativeName>
        <fullName evidence="1">TDP-Fuc4NAc:lipid II Fuc4NAc transferase</fullName>
        <shortName evidence="1">Fuc4NAc transferase</shortName>
    </alternativeName>
</protein>
<organism>
    <name type="scientific">Shigella boydii serotype 18 (strain CDC 3083-94 / BS512)</name>
    <dbReference type="NCBI Taxonomy" id="344609"/>
    <lineage>
        <taxon>Bacteria</taxon>
        <taxon>Pseudomonadati</taxon>
        <taxon>Pseudomonadota</taxon>
        <taxon>Gammaproteobacteria</taxon>
        <taxon>Enterobacterales</taxon>
        <taxon>Enterobacteriaceae</taxon>
        <taxon>Shigella</taxon>
    </lineage>
</organism>
<proteinExistence type="inferred from homology"/>